<proteinExistence type="inferred from homology"/>
<evidence type="ECO:0000255" key="1">
    <source>
        <dbReference type="HAMAP-Rule" id="MF_00237"/>
    </source>
</evidence>
<evidence type="ECO:0000256" key="2">
    <source>
        <dbReference type="SAM" id="MobiDB-lite"/>
    </source>
</evidence>
<reference key="1">
    <citation type="journal article" date="2006" name="Genome Biol.">
        <title>The genome of Rhizobium leguminosarum has recognizable core and accessory components.</title>
        <authorList>
            <person name="Young J.P.W."/>
            <person name="Crossman L.C."/>
            <person name="Johnston A.W.B."/>
            <person name="Thomson N.R."/>
            <person name="Ghazoui Z.F."/>
            <person name="Hull K.H."/>
            <person name="Wexler M."/>
            <person name="Curson A.R.J."/>
            <person name="Todd J.D."/>
            <person name="Poole P.S."/>
            <person name="Mauchline T.H."/>
            <person name="East A.K."/>
            <person name="Quail M.A."/>
            <person name="Churcher C."/>
            <person name="Arrowsmith C."/>
            <person name="Cherevach I."/>
            <person name="Chillingworth T."/>
            <person name="Clarke K."/>
            <person name="Cronin A."/>
            <person name="Davis P."/>
            <person name="Fraser A."/>
            <person name="Hance Z."/>
            <person name="Hauser H."/>
            <person name="Jagels K."/>
            <person name="Moule S."/>
            <person name="Mungall K."/>
            <person name="Norbertczak H."/>
            <person name="Rabbinowitsch E."/>
            <person name="Sanders M."/>
            <person name="Simmonds M."/>
            <person name="Whitehead S."/>
            <person name="Parkhill J."/>
        </authorList>
    </citation>
    <scope>NUCLEOTIDE SEQUENCE [LARGE SCALE GENOMIC DNA]</scope>
    <source>
        <strain>DSM 114642 / LMG 32736 / 3841</strain>
    </source>
</reference>
<keyword id="KW-0997">Cell inner membrane</keyword>
<keyword id="KW-1003">Cell membrane</keyword>
<keyword id="KW-0472">Membrane</keyword>
<keyword id="KW-0653">Protein transport</keyword>
<keyword id="KW-0811">Translocation</keyword>
<keyword id="KW-0812">Transmembrane</keyword>
<keyword id="KW-1133">Transmembrane helix</keyword>
<keyword id="KW-0813">Transport</keyword>
<accession>Q1MHM4</accession>
<dbReference type="EMBL" id="AM236080">
    <property type="protein sequence ID" value="CAK07539.1"/>
    <property type="molecule type" value="Genomic_DNA"/>
</dbReference>
<dbReference type="RefSeq" id="WP_011651656.1">
    <property type="nucleotide sequence ID" value="NC_008380.1"/>
</dbReference>
<dbReference type="SMR" id="Q1MHM4"/>
<dbReference type="EnsemblBacteria" id="CAK07539">
    <property type="protein sequence ID" value="CAK07539"/>
    <property type="gene ID" value="RL2047"/>
</dbReference>
<dbReference type="KEGG" id="rle:RL2047"/>
<dbReference type="eggNOG" id="COG1826">
    <property type="taxonomic scope" value="Bacteria"/>
</dbReference>
<dbReference type="HOGENOM" id="CLU_086034_1_3_5"/>
<dbReference type="Proteomes" id="UP000006575">
    <property type="component" value="Chromosome"/>
</dbReference>
<dbReference type="GO" id="GO:0033281">
    <property type="term" value="C:TAT protein transport complex"/>
    <property type="evidence" value="ECO:0007669"/>
    <property type="project" value="UniProtKB-UniRule"/>
</dbReference>
<dbReference type="GO" id="GO:0008320">
    <property type="term" value="F:protein transmembrane transporter activity"/>
    <property type="evidence" value="ECO:0007669"/>
    <property type="project" value="UniProtKB-UniRule"/>
</dbReference>
<dbReference type="GO" id="GO:0043953">
    <property type="term" value="P:protein transport by the Tat complex"/>
    <property type="evidence" value="ECO:0007669"/>
    <property type="project" value="UniProtKB-UniRule"/>
</dbReference>
<dbReference type="Gene3D" id="1.20.5.3310">
    <property type="match status" value="1"/>
</dbReference>
<dbReference type="HAMAP" id="MF_00237">
    <property type="entry name" value="TatB"/>
    <property type="match status" value="1"/>
</dbReference>
<dbReference type="InterPro" id="IPR003369">
    <property type="entry name" value="TatA/B/E"/>
</dbReference>
<dbReference type="InterPro" id="IPR018448">
    <property type="entry name" value="TatB"/>
</dbReference>
<dbReference type="NCBIfam" id="TIGR01410">
    <property type="entry name" value="tatB"/>
    <property type="match status" value="1"/>
</dbReference>
<dbReference type="PANTHER" id="PTHR33162">
    <property type="entry name" value="SEC-INDEPENDENT PROTEIN TRANSLOCASE PROTEIN TATA, CHLOROPLASTIC"/>
    <property type="match status" value="1"/>
</dbReference>
<dbReference type="PANTHER" id="PTHR33162:SF1">
    <property type="entry name" value="SEC-INDEPENDENT PROTEIN TRANSLOCASE PROTEIN TATA, CHLOROPLASTIC"/>
    <property type="match status" value="1"/>
</dbReference>
<dbReference type="Pfam" id="PF02416">
    <property type="entry name" value="TatA_B_E"/>
    <property type="match status" value="1"/>
</dbReference>
<dbReference type="PRINTS" id="PR01506">
    <property type="entry name" value="TATBPROTEIN"/>
</dbReference>
<name>TATB_RHIJ3</name>
<sequence>MFDIGWTELLVIAVVLIVVVGPKDLPPMLRAFGKMTQRARKVAGDFRAQFDEALREAELDDVRQTISDAQKLNPVNSLREAMNPLRQMGNEIKADLQKATTVTENKTEVPPDAVAAPTPSMSLPETPPLVATPAPSEPVAAAVVQADTVAAKPKAVRKPRGKIADKVDAAAAVAVPVEKPKRTTAVRKPATLKKPAQTKKDEA</sequence>
<feature type="chain" id="PRO_0000301220" description="Sec-independent protein translocase protein TatB">
    <location>
        <begin position="1"/>
        <end position="203"/>
    </location>
</feature>
<feature type="transmembrane region" description="Helical" evidence="1">
    <location>
        <begin position="1"/>
        <end position="21"/>
    </location>
</feature>
<feature type="region of interest" description="Disordered" evidence="2">
    <location>
        <begin position="179"/>
        <end position="203"/>
    </location>
</feature>
<protein>
    <recommendedName>
        <fullName evidence="1">Sec-independent protein translocase protein TatB</fullName>
    </recommendedName>
</protein>
<organism>
    <name type="scientific">Rhizobium johnstonii (strain DSM 114642 / LMG 32736 / 3841)</name>
    <name type="common">Rhizobium leguminosarum bv. viciae</name>
    <dbReference type="NCBI Taxonomy" id="216596"/>
    <lineage>
        <taxon>Bacteria</taxon>
        <taxon>Pseudomonadati</taxon>
        <taxon>Pseudomonadota</taxon>
        <taxon>Alphaproteobacteria</taxon>
        <taxon>Hyphomicrobiales</taxon>
        <taxon>Rhizobiaceae</taxon>
        <taxon>Rhizobium/Agrobacterium group</taxon>
        <taxon>Rhizobium</taxon>
        <taxon>Rhizobium johnstonii</taxon>
    </lineage>
</organism>
<gene>
    <name evidence="1" type="primary">tatB</name>
    <name type="ordered locus">RL2047</name>
</gene>
<comment type="function">
    <text evidence="1">Part of the twin-arginine translocation (Tat) system that transports large folded proteins containing a characteristic twin-arginine motif in their signal peptide across membranes. Together with TatC, TatB is part of a receptor directly interacting with Tat signal peptides. TatB may form an oligomeric binding site that transiently accommodates folded Tat precursor proteins before their translocation.</text>
</comment>
<comment type="subunit">
    <text evidence="1">The Tat system comprises two distinct complexes: a TatABC complex, containing multiple copies of TatA, TatB and TatC subunits, and a separate TatA complex, containing only TatA subunits. Substrates initially bind to the TatABC complex, which probably triggers association of the separate TatA complex to form the active translocon.</text>
</comment>
<comment type="subcellular location">
    <subcellularLocation>
        <location evidence="1">Cell inner membrane</location>
        <topology evidence="1">Single-pass membrane protein</topology>
    </subcellularLocation>
</comment>
<comment type="similarity">
    <text evidence="1">Belongs to the TatB family.</text>
</comment>